<proteinExistence type="evidence at protein level"/>
<name>DRG1_HUMAN</name>
<feature type="initiator methionine" description="Removed" evidence="21">
    <location>
        <position position="1"/>
    </location>
</feature>
<feature type="chain" id="PRO_0000205424" description="Developmentally-regulated GTP-binding protein 1">
    <location>
        <begin position="2"/>
        <end position="367"/>
    </location>
</feature>
<feature type="domain" description="OBG-type G" evidence="2">
    <location>
        <begin position="65"/>
        <end position="290"/>
    </location>
</feature>
<feature type="domain" description="TGS" evidence="3 15">
    <location>
        <begin position="290"/>
        <end position="366"/>
    </location>
</feature>
<feature type="region of interest" description="Required for interaction with STK16" evidence="7">
    <location>
        <begin position="2"/>
        <end position="16"/>
    </location>
</feature>
<feature type="binding site" evidence="2">
    <location>
        <begin position="71"/>
        <end position="78"/>
    </location>
    <ligand>
        <name>GTP</name>
        <dbReference type="ChEBI" id="CHEBI:37565"/>
    </ligand>
</feature>
<feature type="binding site" evidence="2">
    <location>
        <position position="78"/>
    </location>
    <ligand>
        <name>Mg(2+)</name>
        <dbReference type="ChEBI" id="CHEBI:18420"/>
    </ligand>
</feature>
<feature type="binding site" evidence="2">
    <location>
        <position position="98"/>
    </location>
    <ligand>
        <name>Mg(2+)</name>
        <dbReference type="ChEBI" id="CHEBI:18420"/>
    </ligand>
</feature>
<feature type="binding site" evidence="2">
    <location>
        <begin position="117"/>
        <end position="121"/>
    </location>
    <ligand>
        <name>GTP</name>
        <dbReference type="ChEBI" id="CHEBI:37565"/>
    </ligand>
</feature>
<feature type="binding site" evidence="2">
    <location>
        <begin position="248"/>
        <end position="251"/>
    </location>
    <ligand>
        <name>GTP</name>
        <dbReference type="ChEBI" id="CHEBI:37565"/>
    </ligand>
</feature>
<feature type="modified residue" description="N-acetylserine" evidence="21">
    <location>
        <position position="2"/>
    </location>
</feature>
<feature type="modified residue" description="(3S)-3-hydroxylysine" evidence="12 13">
    <location>
        <position position="22"/>
    </location>
</feature>
<feature type="modified residue" description="Phosphothreonine; by STK16" evidence="7">
    <location>
        <position position="100"/>
    </location>
</feature>
<feature type="sequence variant" id="VAR_089184" description="In TANALS; likely pathogenic." evidence="14">
    <location>
        <begin position="54"/>
        <end position="367"/>
    </location>
</feature>
<feature type="sequence variant" id="VAR_089185" description="In TANALS; likely pathogenic." evidence="14">
    <location>
        <begin position="140"/>
        <end position="367"/>
    </location>
</feature>
<feature type="sequence variant" id="VAR_089186" description="In TANALS; likely pathogenic; loss of GTPase activity; loss of interaction with DFRP1/ZC3H15; requires 2 nucleotide substitutions." evidence="14">
    <original>N</original>
    <variation>F</variation>
    <location>
        <position position="248"/>
    </location>
</feature>
<feature type="sequence variant" id="VAR_089187" description="In TANALS; likely pathogenic; loss of interaction with DFRP1/ZC3H15." evidence="14">
    <location>
        <begin position="263"/>
        <end position="367"/>
    </location>
</feature>
<feature type="mutagenesis site" description="Impairs JMJD7-mediated hydroxylation." evidence="12">
    <original>K</original>
    <variation>A</variation>
    <location>
        <position position="22"/>
    </location>
</feature>
<feature type="mutagenesis site" description="Reduces the GTPase activity." evidence="9">
    <original>T</original>
    <variation>D</variation>
    <location>
        <position position="100"/>
    </location>
</feature>
<feature type="mutagenesis site" description="Loss of GTPase activity." evidence="14">
    <original>D</original>
    <variation>A</variation>
    <location>
        <position position="117"/>
    </location>
</feature>
<feature type="sequence conflict" description="In Ref. 8; AAH20803." evidence="17" ref="8">
    <original>V</original>
    <variation>A</variation>
    <location>
        <position position="91"/>
    </location>
</feature>
<feature type="strand" evidence="22">
    <location>
        <begin position="291"/>
        <end position="296"/>
    </location>
</feature>
<feature type="strand" evidence="22">
    <location>
        <begin position="305"/>
        <end position="307"/>
    </location>
</feature>
<feature type="strand" evidence="22">
    <location>
        <begin position="309"/>
        <end position="312"/>
    </location>
</feature>
<feature type="helix" evidence="22">
    <location>
        <begin position="318"/>
        <end position="325"/>
    </location>
</feature>
<feature type="turn" evidence="22">
    <location>
        <begin position="330"/>
        <end position="332"/>
    </location>
</feature>
<feature type="strand" evidence="22">
    <location>
        <begin position="333"/>
        <end position="340"/>
    </location>
</feature>
<feature type="strand" evidence="22">
    <location>
        <begin position="343"/>
        <end position="350"/>
    </location>
</feature>
<feature type="strand" evidence="22">
    <location>
        <begin position="358"/>
        <end position="362"/>
    </location>
</feature>
<feature type="strand" evidence="22">
    <location>
        <begin position="364"/>
        <end position="366"/>
    </location>
</feature>
<evidence type="ECO:0000250" key="1">
    <source>
        <dbReference type="UniProtKB" id="P32233"/>
    </source>
</evidence>
<evidence type="ECO:0000255" key="2">
    <source>
        <dbReference type="PROSITE-ProRule" id="PRU01047"/>
    </source>
</evidence>
<evidence type="ECO:0000255" key="3">
    <source>
        <dbReference type="PROSITE-ProRule" id="PRU01228"/>
    </source>
</evidence>
<evidence type="ECO:0000269" key="4">
    <source>
    </source>
</evidence>
<evidence type="ECO:0000269" key="5">
    <source>
    </source>
</evidence>
<evidence type="ECO:0000269" key="6">
    <source>
    </source>
</evidence>
<evidence type="ECO:0000269" key="7">
    <source>
    </source>
</evidence>
<evidence type="ECO:0000269" key="8">
    <source>
    </source>
</evidence>
<evidence type="ECO:0000269" key="9">
    <source>
    </source>
</evidence>
<evidence type="ECO:0000269" key="10">
    <source>
    </source>
</evidence>
<evidence type="ECO:0000269" key="11">
    <source>
    </source>
</evidence>
<evidence type="ECO:0000269" key="12">
    <source>
    </source>
</evidence>
<evidence type="ECO:0000269" key="13">
    <source>
    </source>
</evidence>
<evidence type="ECO:0000269" key="14">
    <source>
    </source>
</evidence>
<evidence type="ECO:0000303" key="15">
    <source>
    </source>
</evidence>
<evidence type="ECO:0000303" key="16">
    <source>
    </source>
</evidence>
<evidence type="ECO:0000305" key="17"/>
<evidence type="ECO:0000305" key="18">
    <source>
    </source>
</evidence>
<evidence type="ECO:0000305" key="19">
    <source>
    </source>
</evidence>
<evidence type="ECO:0000312" key="20">
    <source>
        <dbReference type="HGNC" id="HGNC:3029"/>
    </source>
</evidence>
<evidence type="ECO:0007744" key="21">
    <source>
    </source>
</evidence>
<evidence type="ECO:0007829" key="22">
    <source>
        <dbReference type="PDB" id="2EKI"/>
    </source>
</evidence>
<organism>
    <name type="scientific">Homo sapiens</name>
    <name type="common">Human</name>
    <dbReference type="NCBI Taxonomy" id="9606"/>
    <lineage>
        <taxon>Eukaryota</taxon>
        <taxon>Metazoa</taxon>
        <taxon>Chordata</taxon>
        <taxon>Craniata</taxon>
        <taxon>Vertebrata</taxon>
        <taxon>Euteleostomi</taxon>
        <taxon>Mammalia</taxon>
        <taxon>Eutheria</taxon>
        <taxon>Euarchontoglires</taxon>
        <taxon>Primates</taxon>
        <taxon>Haplorrhini</taxon>
        <taxon>Catarrhini</taxon>
        <taxon>Hominidae</taxon>
        <taxon>Homo</taxon>
    </lineage>
</organism>
<sequence>MSSTLAKIAEIEAEMARTQKNKATAHHLGLLKARLAKLRRELITPKGGGGGGPGEGFDVAKTGDARIGFVGFPSVGKSTLLSNLAGVYSEVAAYEFTTLTTVPGVIRYKGAKIQLLDLPGIIEGAKDGKGRGRQVIAVARTCNLILIVLDVLKPLGHKKIIENELEGFGIRLNSKPPNIGFKKKDKGGINLTATCPQSELDAETVKSILAEYKIHNADVTLRSDATADDLIDVVEGNRVYIPCIYVLNKIDQISIEELDIIYKVPHCVPISAHHRWNFDDLLEKIWDYLKLVRIYTKPKGQLPDYTSPVVLPYSRTTVEDFCMKIHKNLIKEFKYALVWGLSVKHNPQKVGKDHTLEDEDVIQIVKK</sequence>
<protein>
    <recommendedName>
        <fullName>Developmentally-regulated GTP-binding protein 1</fullName>
        <shortName>DRG-1</shortName>
    </recommendedName>
    <alternativeName>
        <fullName>Neural precursor cell expressed developmentally down-regulated protein 3</fullName>
        <shortName>NEDD-3</shortName>
    </alternativeName>
    <alternativeName>
        <fullName>Translation factor GTPase DRG1</fullName>
        <shortName>TRAFAC GTPase DRG1</shortName>
        <ecNumber evidence="19">3.6.5.-</ecNumber>
    </alternativeName>
</protein>
<dbReference type="EC" id="3.6.5.-" evidence="19"/>
<dbReference type="EMBL" id="AF078103">
    <property type="protein sequence ID" value="AAD12240.1"/>
    <property type="molecule type" value="mRNA"/>
</dbReference>
<dbReference type="EMBL" id="AJ005940">
    <property type="protein sequence ID" value="CAA06775.1"/>
    <property type="molecule type" value="mRNA"/>
</dbReference>
<dbReference type="EMBL" id="CR542059">
    <property type="protein sequence ID" value="CAG46856.1"/>
    <property type="molecule type" value="mRNA"/>
</dbReference>
<dbReference type="EMBL" id="CR456488">
    <property type="protein sequence ID" value="CAG30374.1"/>
    <property type="molecule type" value="mRNA"/>
</dbReference>
<dbReference type="EMBL" id="BT007237">
    <property type="protein sequence ID" value="AAP35901.1"/>
    <property type="molecule type" value="mRNA"/>
</dbReference>
<dbReference type="EMBL" id="AK315659">
    <property type="protein sequence ID" value="BAG38025.1"/>
    <property type="molecule type" value="mRNA"/>
</dbReference>
<dbReference type="EMBL" id="AL096701">
    <property type="status" value="NOT_ANNOTATED_CDS"/>
    <property type="molecule type" value="Genomic_DNA"/>
</dbReference>
<dbReference type="EMBL" id="AL096702">
    <property type="status" value="NOT_ANNOTATED_CDS"/>
    <property type="molecule type" value="Genomic_DNA"/>
</dbReference>
<dbReference type="EMBL" id="CH471095">
    <property type="protein sequence ID" value="EAW59976.1"/>
    <property type="molecule type" value="Genomic_DNA"/>
</dbReference>
<dbReference type="EMBL" id="BC019285">
    <property type="protein sequence ID" value="AAH19285.1"/>
    <property type="molecule type" value="mRNA"/>
</dbReference>
<dbReference type="EMBL" id="BC020803">
    <property type="protein sequence ID" value="AAH20803.1"/>
    <property type="molecule type" value="mRNA"/>
</dbReference>
<dbReference type="CCDS" id="CCDS13897.1"/>
<dbReference type="RefSeq" id="NP_004138.1">
    <property type="nucleotide sequence ID" value="NM_004147.4"/>
</dbReference>
<dbReference type="PDB" id="2EKI">
    <property type="method" value="NMR"/>
    <property type="chains" value="A=288-367"/>
</dbReference>
<dbReference type="PDBsum" id="2EKI"/>
<dbReference type="BMRB" id="Q9Y295"/>
<dbReference type="SMR" id="Q9Y295"/>
<dbReference type="BioGRID" id="110810">
    <property type="interactions" value="384"/>
</dbReference>
<dbReference type="CORUM" id="Q9Y295"/>
<dbReference type="FunCoup" id="Q9Y295">
    <property type="interactions" value="3828"/>
</dbReference>
<dbReference type="IntAct" id="Q9Y295">
    <property type="interactions" value="256"/>
</dbReference>
<dbReference type="MINT" id="Q9Y295"/>
<dbReference type="STRING" id="9606.ENSP00000329715"/>
<dbReference type="GlyGen" id="Q9Y295">
    <property type="glycosylation" value="1 site, 1 O-linked glycan (1 site)"/>
</dbReference>
<dbReference type="iPTMnet" id="Q9Y295"/>
<dbReference type="MetOSite" id="Q9Y295"/>
<dbReference type="PhosphoSitePlus" id="Q9Y295"/>
<dbReference type="SwissPalm" id="Q9Y295"/>
<dbReference type="BioMuta" id="DRG1"/>
<dbReference type="DMDM" id="6685390"/>
<dbReference type="jPOST" id="Q9Y295"/>
<dbReference type="MassIVE" id="Q9Y295"/>
<dbReference type="PaxDb" id="9606-ENSP00000329715"/>
<dbReference type="PeptideAtlas" id="Q9Y295"/>
<dbReference type="ProteomicsDB" id="85703"/>
<dbReference type="Pumba" id="Q9Y295"/>
<dbReference type="Antibodypedia" id="238">
    <property type="antibodies" value="223 antibodies from 28 providers"/>
</dbReference>
<dbReference type="DNASU" id="4733"/>
<dbReference type="Ensembl" id="ENST00000331457.9">
    <property type="protein sequence ID" value="ENSP00000329715.4"/>
    <property type="gene ID" value="ENSG00000185721.14"/>
</dbReference>
<dbReference type="GeneID" id="4733"/>
<dbReference type="KEGG" id="hsa:4733"/>
<dbReference type="MANE-Select" id="ENST00000331457.9">
    <property type="protein sequence ID" value="ENSP00000329715.4"/>
    <property type="RefSeq nucleotide sequence ID" value="NM_004147.4"/>
    <property type="RefSeq protein sequence ID" value="NP_004138.1"/>
</dbReference>
<dbReference type="UCSC" id="uc003aku.4">
    <property type="organism name" value="human"/>
</dbReference>
<dbReference type="AGR" id="HGNC:3029"/>
<dbReference type="CTD" id="4733"/>
<dbReference type="DisGeNET" id="4733"/>
<dbReference type="GeneCards" id="DRG1"/>
<dbReference type="HGNC" id="HGNC:3029">
    <property type="gene designation" value="DRG1"/>
</dbReference>
<dbReference type="HPA" id="ENSG00000185721">
    <property type="expression patterns" value="Tissue enhanced (testis)"/>
</dbReference>
<dbReference type="MalaCards" id="DRG1"/>
<dbReference type="MIM" id="603952">
    <property type="type" value="gene"/>
</dbReference>
<dbReference type="MIM" id="620641">
    <property type="type" value="phenotype"/>
</dbReference>
<dbReference type="neXtProt" id="NX_Q9Y295"/>
<dbReference type="OpenTargets" id="ENSG00000185721"/>
<dbReference type="PharmGKB" id="PA27483"/>
<dbReference type="VEuPathDB" id="HostDB:ENSG00000185721"/>
<dbReference type="eggNOG" id="KOG1487">
    <property type="taxonomic scope" value="Eukaryota"/>
</dbReference>
<dbReference type="GeneTree" id="ENSGT00940000153340"/>
<dbReference type="HOGENOM" id="CLU_044997_0_0_1"/>
<dbReference type="InParanoid" id="Q9Y295"/>
<dbReference type="OMA" id="SAKHPGQ"/>
<dbReference type="OrthoDB" id="603at2759"/>
<dbReference type="PAN-GO" id="Q9Y295">
    <property type="GO annotations" value="3 GO annotations based on evolutionary models"/>
</dbReference>
<dbReference type="PhylomeDB" id="Q9Y295"/>
<dbReference type="TreeFam" id="TF105677"/>
<dbReference type="PathwayCommons" id="Q9Y295"/>
<dbReference type="Reactome" id="R-HSA-9629569">
    <property type="pathway name" value="Protein hydroxylation"/>
</dbReference>
<dbReference type="SignaLink" id="Q9Y295"/>
<dbReference type="SIGNOR" id="Q9Y295"/>
<dbReference type="BioGRID-ORCS" id="4733">
    <property type="hits" value="175 hits in 1140 CRISPR screens"/>
</dbReference>
<dbReference type="ChiTaRS" id="DRG1">
    <property type="organism name" value="human"/>
</dbReference>
<dbReference type="EvolutionaryTrace" id="Q9Y295"/>
<dbReference type="GeneWiki" id="DRG1"/>
<dbReference type="GenomeRNAi" id="4733"/>
<dbReference type="Pharos" id="Q9Y295">
    <property type="development level" value="Tbio"/>
</dbReference>
<dbReference type="PRO" id="PR:Q9Y295"/>
<dbReference type="Proteomes" id="UP000005640">
    <property type="component" value="Chromosome 22"/>
</dbReference>
<dbReference type="RNAct" id="Q9Y295">
    <property type="molecule type" value="protein"/>
</dbReference>
<dbReference type="Bgee" id="ENSG00000185721">
    <property type="expression patterns" value="Expressed in left testis and 208 other cell types or tissues"/>
</dbReference>
<dbReference type="ExpressionAtlas" id="Q9Y295">
    <property type="expression patterns" value="baseline and differential"/>
</dbReference>
<dbReference type="GO" id="GO:0005737">
    <property type="term" value="C:cytoplasm"/>
    <property type="evidence" value="ECO:0000314"/>
    <property type="project" value="UniProtKB"/>
</dbReference>
<dbReference type="GO" id="GO:0005829">
    <property type="term" value="C:cytosol"/>
    <property type="evidence" value="ECO:0000314"/>
    <property type="project" value="HPA"/>
</dbReference>
<dbReference type="GO" id="GO:0016020">
    <property type="term" value="C:membrane"/>
    <property type="evidence" value="ECO:0007005"/>
    <property type="project" value="UniProtKB"/>
</dbReference>
<dbReference type="GO" id="GO:0016604">
    <property type="term" value="C:nuclear body"/>
    <property type="evidence" value="ECO:0000314"/>
    <property type="project" value="HPA"/>
</dbReference>
<dbReference type="GO" id="GO:0005654">
    <property type="term" value="C:nucleoplasm"/>
    <property type="evidence" value="ECO:0000314"/>
    <property type="project" value="HPA"/>
</dbReference>
<dbReference type="GO" id="GO:0005634">
    <property type="term" value="C:nucleus"/>
    <property type="evidence" value="ECO:0000314"/>
    <property type="project" value="UniProtKB"/>
</dbReference>
<dbReference type="GO" id="GO:0005525">
    <property type="term" value="F:GTP binding"/>
    <property type="evidence" value="ECO:0000318"/>
    <property type="project" value="GO_Central"/>
</dbReference>
<dbReference type="GO" id="GO:0003924">
    <property type="term" value="F:GTPase activity"/>
    <property type="evidence" value="ECO:0000314"/>
    <property type="project" value="UniProtKB"/>
</dbReference>
<dbReference type="GO" id="GO:0042802">
    <property type="term" value="F:identical protein binding"/>
    <property type="evidence" value="ECO:0000353"/>
    <property type="project" value="IntAct"/>
</dbReference>
<dbReference type="GO" id="GO:0008017">
    <property type="term" value="F:microtubule binding"/>
    <property type="evidence" value="ECO:0000314"/>
    <property type="project" value="UniProtKB"/>
</dbReference>
<dbReference type="GO" id="GO:0030955">
    <property type="term" value="F:potassium ion binding"/>
    <property type="evidence" value="ECO:0000314"/>
    <property type="project" value="UniProtKB"/>
</dbReference>
<dbReference type="GO" id="GO:0002181">
    <property type="term" value="P:cytoplasmic translation"/>
    <property type="evidence" value="ECO:0000318"/>
    <property type="project" value="GO_Central"/>
</dbReference>
<dbReference type="GO" id="GO:0031116">
    <property type="term" value="P:positive regulation of microtubule polymerization"/>
    <property type="evidence" value="ECO:0000315"/>
    <property type="project" value="UniProtKB"/>
</dbReference>
<dbReference type="GO" id="GO:1901673">
    <property type="term" value="P:regulation of mitotic spindle assembly"/>
    <property type="evidence" value="ECO:0000315"/>
    <property type="project" value="UniProtKB"/>
</dbReference>
<dbReference type="CDD" id="cd01896">
    <property type="entry name" value="DRG"/>
    <property type="match status" value="1"/>
</dbReference>
<dbReference type="CDD" id="cd17230">
    <property type="entry name" value="TGS_DRG1"/>
    <property type="match status" value="1"/>
</dbReference>
<dbReference type="FunFam" id="3.10.20.30:FF:000003">
    <property type="entry name" value="Developmentally-regulated GTP-binding protein 1"/>
    <property type="match status" value="1"/>
</dbReference>
<dbReference type="FunFam" id="3.40.50.300:FF:002634">
    <property type="entry name" value="Small GTP-binding protein"/>
    <property type="match status" value="1"/>
</dbReference>
<dbReference type="Gene3D" id="3.10.20.30">
    <property type="match status" value="1"/>
</dbReference>
<dbReference type="Gene3D" id="6.10.140.1070">
    <property type="match status" value="2"/>
</dbReference>
<dbReference type="InterPro" id="IPR012675">
    <property type="entry name" value="Beta-grasp_dom_sf"/>
</dbReference>
<dbReference type="InterPro" id="IPR045001">
    <property type="entry name" value="DRG"/>
</dbReference>
<dbReference type="InterPro" id="IPR031167">
    <property type="entry name" value="G_OBG"/>
</dbReference>
<dbReference type="InterPro" id="IPR006073">
    <property type="entry name" value="GTP-bd"/>
</dbReference>
<dbReference type="InterPro" id="IPR031662">
    <property type="entry name" value="GTP-binding_2"/>
</dbReference>
<dbReference type="InterPro" id="IPR006074">
    <property type="entry name" value="GTP1-OBG_CS"/>
</dbReference>
<dbReference type="InterPro" id="IPR027417">
    <property type="entry name" value="P-loop_NTPase"/>
</dbReference>
<dbReference type="InterPro" id="IPR005225">
    <property type="entry name" value="Small_GTP-bd"/>
</dbReference>
<dbReference type="InterPro" id="IPR004095">
    <property type="entry name" value="TGS"/>
</dbReference>
<dbReference type="InterPro" id="IPR012676">
    <property type="entry name" value="TGS-like"/>
</dbReference>
<dbReference type="NCBIfam" id="TIGR00231">
    <property type="entry name" value="small_GTP"/>
    <property type="match status" value="1"/>
</dbReference>
<dbReference type="PANTHER" id="PTHR43127">
    <property type="entry name" value="DEVELOPMENTALLY-REGULATED GTP-BINDING PROTEIN 2"/>
    <property type="match status" value="1"/>
</dbReference>
<dbReference type="Pfam" id="PF01926">
    <property type="entry name" value="MMR_HSR1"/>
    <property type="match status" value="1"/>
</dbReference>
<dbReference type="Pfam" id="PF16897">
    <property type="entry name" value="MMR_HSR1_Xtn"/>
    <property type="match status" value="1"/>
</dbReference>
<dbReference type="Pfam" id="PF02824">
    <property type="entry name" value="TGS"/>
    <property type="match status" value="1"/>
</dbReference>
<dbReference type="PRINTS" id="PR00326">
    <property type="entry name" value="GTP1OBG"/>
</dbReference>
<dbReference type="SUPFAM" id="SSF52540">
    <property type="entry name" value="P-loop containing nucleoside triphosphate hydrolases"/>
    <property type="match status" value="1"/>
</dbReference>
<dbReference type="SUPFAM" id="SSF81271">
    <property type="entry name" value="TGS-like"/>
    <property type="match status" value="1"/>
</dbReference>
<dbReference type="PROSITE" id="PS51710">
    <property type="entry name" value="G_OBG"/>
    <property type="match status" value="1"/>
</dbReference>
<dbReference type="PROSITE" id="PS00905">
    <property type="entry name" value="GTP1_OBG"/>
    <property type="match status" value="1"/>
</dbReference>
<dbReference type="PROSITE" id="PS51880">
    <property type="entry name" value="TGS"/>
    <property type="match status" value="1"/>
</dbReference>
<comment type="function">
    <text evidence="8 9 11 12 14">Catalyzes the conversion of GTP to GDP through hydrolysis of the gamma-phosphate bond in GTP (PubMed:23711155, PubMed:29915238, PubMed:37179472). Appears to have an intrinsic GTPase activity that is stimulated by ZC3H15/DFRP1 binding likely by increasing the affinity for the potassium ions (PubMed:23711155). When hydroxylated at C-3 of 'Lys-22' by JMJD7, may bind to RNA and play a role in translation (PubMed:19819225, PubMed:29915238). Binds to microtubules and promotes microtubule polymerization and stability that are required for mitotic spindle assembly during prophase to anaphase transition. GTPase activity is not necessary for these microtubule-related functions (PubMed:28855639).</text>
</comment>
<comment type="catalytic activity">
    <reaction evidence="12">
        <text>GTP + H2O = GDP + phosphate + H(+)</text>
        <dbReference type="Rhea" id="RHEA:19669"/>
        <dbReference type="ChEBI" id="CHEBI:15377"/>
        <dbReference type="ChEBI" id="CHEBI:15378"/>
        <dbReference type="ChEBI" id="CHEBI:37565"/>
        <dbReference type="ChEBI" id="CHEBI:43474"/>
        <dbReference type="ChEBI" id="CHEBI:58189"/>
    </reaction>
    <physiologicalReaction direction="left-to-right" evidence="12">
        <dbReference type="Rhea" id="RHEA:19670"/>
    </physiologicalReaction>
</comment>
<comment type="cofactor">
    <cofactor evidence="18">
        <name>Mg(2+)</name>
        <dbReference type="ChEBI" id="CHEBI:18420"/>
    </cofactor>
</comment>
<comment type="cofactor">
    <cofactor evidence="9">
        <name>K(+)</name>
        <dbReference type="ChEBI" id="CHEBI:29103"/>
    </cofactor>
</comment>
<comment type="activity regulation">
    <text evidence="9">The GTPase activity is enhanced by potassium ions as well as by DFRP1 binding.</text>
</comment>
<comment type="biophysicochemical properties">
    <kinetics>
        <KM evidence="9">0.25 mM for GTP</KM>
        <Vmax evidence="9">3.59 nmol/min/mg enzyme</Vmax>
    </kinetics>
    <phDependence>
        <text evidence="9">Optimum pH is 8-9.</text>
    </phDependence>
    <temperatureDependence>
        <text evidence="9">Optimum temperature is 42 degrees Celsius.</text>
    </temperatureDependence>
</comment>
<comment type="subunit">
    <text evidence="5 7 8 11 12 14">Interacts (via its C-terminal) with TAL1. Interacts with DFRP1/ZC3H15; this interaction prevents DRG1 poly-ubiquitination and degradation by the proteasome (PubMed:15676025, PubMed:37179472). DRG1-ZC3H15/DFRP1 complex co-sediments with polysomes (PubMed:19819225). Interacts with STK16 (PubMed:18184589). Interacts with JMJD7 (PubMed:29915238). Associates with microtubules either in an immobile or diffusive manner; in vitro binds to tubulin lacking the negatively charged C-terminal domain (PubMed:28855639).</text>
</comment>
<comment type="subunit">
    <text evidence="10">(Microbial infection) Interacts with Chandipura virus matrix protein.</text>
</comment>
<comment type="interaction">
    <interactant intactId="EBI-719554">
        <id>Q9Y295</id>
    </interactant>
    <interactant intactId="EBI-349854">
        <id>P13569</id>
        <label>CFTR</label>
    </interactant>
    <organismsDiffer>false</organismsDiffer>
    <experiments>9</experiments>
</comment>
<comment type="interaction">
    <interactant intactId="EBI-719554">
        <id>Q9Y295</id>
    </interactant>
    <interactant intactId="EBI-945751">
        <id>P38432</id>
        <label>COIL</label>
    </interactant>
    <organismsDiffer>false</organismsDiffer>
    <experiments>3</experiments>
</comment>
<comment type="interaction">
    <interactant intactId="EBI-719554">
        <id>Q9Y295</id>
    </interactant>
    <interactant intactId="EBI-719554">
        <id>Q9Y295</id>
        <label>DRG1</label>
    </interactant>
    <organismsDiffer>false</organismsDiffer>
    <experiments>2</experiments>
</comment>
<comment type="interaction">
    <interactant intactId="EBI-719554">
        <id>Q9Y295</id>
    </interactant>
    <interactant intactId="EBI-739832">
        <id>Q8TBB1</id>
        <label>LNX1</label>
    </interactant>
    <organismsDiffer>false</organismsDiffer>
    <experiments>3</experiments>
</comment>
<comment type="interaction">
    <interactant intactId="EBI-719554">
        <id>Q9Y295</id>
    </interactant>
    <interactant intactId="EBI-16439278">
        <id>Q6FHY5</id>
        <label>MEOX2</label>
    </interactant>
    <organismsDiffer>false</organismsDiffer>
    <experiments>3</experiments>
</comment>
<comment type="interaction">
    <interactant intactId="EBI-719554">
        <id>Q9Y295</id>
    </interactant>
    <interactant intactId="EBI-713786">
        <id>Q8IXK0</id>
        <label>PHC2</label>
    </interactant>
    <organismsDiffer>false</organismsDiffer>
    <experiments>4</experiments>
</comment>
<comment type="interaction">
    <interactant intactId="EBI-719554">
        <id>Q9Y295</id>
    </interactant>
    <interactant intactId="EBI-748952">
        <id>Q9H446</id>
        <label>RWDD1</label>
    </interactant>
    <organismsDiffer>false</organismsDiffer>
    <experiments>8</experiments>
</comment>
<comment type="interaction">
    <interactant intactId="EBI-719554">
        <id>Q9Y295</id>
    </interactant>
    <interactant intactId="EBI-2902468">
        <id>P12757</id>
        <label>SKIL</label>
    </interactant>
    <organismsDiffer>false</organismsDiffer>
    <experiments>3</experiments>
</comment>
<comment type="interaction">
    <interactant intactId="EBI-719554">
        <id>Q9Y295</id>
    </interactant>
    <interactant intactId="EBI-2212028">
        <id>Q9Y2D8</id>
        <label>SSX2IP</label>
    </interactant>
    <organismsDiffer>false</organismsDiffer>
    <experiments>3</experiments>
</comment>
<comment type="interaction">
    <interactant intactId="EBI-719554">
        <id>Q9Y295</id>
    </interactant>
    <interactant intactId="EBI-749295">
        <id>O75716</id>
        <label>STK16</label>
    </interactant>
    <organismsDiffer>false</organismsDiffer>
    <experiments>3</experiments>
</comment>
<comment type="interaction">
    <interactant intactId="EBI-719554">
        <id>Q9Y295</id>
    </interactant>
    <interactant intactId="EBI-1042636">
        <id>Q8WU90</id>
        <label>ZC3H15</label>
    </interactant>
    <organismsDiffer>false</organismsDiffer>
    <experiments>11</experiments>
</comment>
<comment type="interaction">
    <interactant intactId="EBI-719554">
        <id>Q9Y295</id>
    </interactant>
    <interactant intactId="EBI-10823897">
        <id>Q9WH76</id>
        <label>M</label>
    </interactant>
    <organismsDiffer>true</organismsDiffer>
    <experiments>3</experiments>
</comment>
<comment type="subcellular location">
    <subcellularLocation>
        <location evidence="12">Nucleus</location>
    </subcellularLocation>
    <subcellularLocation>
        <location evidence="5 8 12">Cytoplasm</location>
    </subcellularLocation>
    <text>The DRG1-ZC3H15/DFRP1 complex associates with polysomes.</text>
</comment>
<comment type="tissue specificity">
    <text evidence="4">High levels in skeletal muscle, heart, and kidney. Intermediate levels in liver, placenta and brain. Low levels in colon, thymus, spleen, small intestine, lung and leukocytes.</text>
</comment>
<comment type="induction">
    <text>By androgens.</text>
</comment>
<comment type="domain">
    <text evidence="9">The ThrRS, GTPase, SpoT (TGS) domain is not necessary for GTP binding nor for the GTPase activity. It appears to play a regulatory role favoring GTP hydrolysis mediated by DFRP1/ZC3H15.</text>
</comment>
<comment type="PTM">
    <text evidence="6">Sumoylated by UBE2I in response to MEKK1-mediated stimuli.</text>
</comment>
<comment type="PTM">
    <text evidence="7">Phosphorylated at Thr-100 by STK16.</text>
</comment>
<comment type="PTM">
    <text evidence="12 13">Hydroxylated (with S stereochemistry) at C-3 of Lys-22 by JMJD7; this modification hinders trypsin-catalyzed proteolysis in vitro.</text>
</comment>
<comment type="PTM">
    <text evidence="1">Polyubiquitinated; this modification induces proteolytic degradation and is impaired by interaction with ZC3H15.</text>
</comment>
<comment type="disease" evidence="14">
    <disease id="DI-06808">
        <name>Tan-Almurshedi syndrome</name>
        <acronym>TANALS</acronym>
        <description>An autosomal recessive neurodevelopmental disorder characterized by global developmental delay, intellectual deficit, poor or absent speech, failure to thrive, short stature, microcephaly, and craniofacial anomalies.</description>
        <dbReference type="MIM" id="620641"/>
    </disease>
    <text>The disease is caused by variants affecting the gene represented in this entry.</text>
</comment>
<comment type="similarity">
    <text evidence="2">Belongs to the TRAFAC class OBG-HflX-like GTPase superfamily. OBG GTPase family.</text>
</comment>
<gene>
    <name evidence="16 20" type="primary">DRG1</name>
    <name type="synonym">NEDD3</name>
</gene>
<accession>Q9Y295</accession>
<accession>B2RDS8</accession>
<accession>Q6FGP8</accession>
<accession>Q8WW69</accession>
<accession>Q9UGF2</accession>
<reference key="1">
    <citation type="journal article" date="1998" name="Biochim. Biophys. Acta">
        <title>SCL binds the human homologue of DRG in vivo.</title>
        <authorList>
            <person name="Zhao X.-F."/>
            <person name="Aplan P.D."/>
        </authorList>
    </citation>
    <scope>NUCLEOTIDE SEQUENCE [MRNA]</scope>
    <scope>INTERACTION WITH TAL1</scope>
</reference>
<reference key="2">
    <citation type="journal article" date="2000" name="Biochim. Biophys. Acta">
        <title>DRG represents a family of two closely related GTP-binding proteins.</title>
        <authorList>
            <person name="Li B."/>
            <person name="Trueeb B."/>
        </authorList>
    </citation>
    <scope>NUCLEOTIDE SEQUENCE [MRNA]</scope>
    <scope>TISSUE SPECIFICITY</scope>
</reference>
<reference key="3">
    <citation type="journal article" date="2004" name="Genome Biol.">
        <title>A genome annotation-driven approach to cloning the human ORFeome.</title>
        <authorList>
            <person name="Collins J.E."/>
            <person name="Wright C.L."/>
            <person name="Edwards C.A."/>
            <person name="Davis M.P."/>
            <person name="Grinham J.A."/>
            <person name="Cole C.G."/>
            <person name="Goward M.E."/>
            <person name="Aguado B."/>
            <person name="Mallya M."/>
            <person name="Mokrab Y."/>
            <person name="Huckle E.J."/>
            <person name="Beare D.M."/>
            <person name="Dunham I."/>
        </authorList>
    </citation>
    <scope>NUCLEOTIDE SEQUENCE [LARGE SCALE MRNA]</scope>
</reference>
<reference key="4">
    <citation type="submission" date="2003-05" db="EMBL/GenBank/DDBJ databases">
        <title>Cloning of human full-length CDSs in BD Creator(TM) system donor vector.</title>
        <authorList>
            <person name="Kalnine N."/>
            <person name="Chen X."/>
            <person name="Rolfs A."/>
            <person name="Halleck A."/>
            <person name="Hines L."/>
            <person name="Eisenstein S."/>
            <person name="Koundinya M."/>
            <person name="Raphael J."/>
            <person name="Moreira D."/>
            <person name="Kelley T."/>
            <person name="LaBaer J."/>
            <person name="Lin Y."/>
            <person name="Phelan M."/>
            <person name="Farmer A."/>
        </authorList>
    </citation>
    <scope>NUCLEOTIDE SEQUENCE [LARGE SCALE MRNA]</scope>
</reference>
<reference key="5">
    <citation type="journal article" date="2004" name="Nat. Genet.">
        <title>Complete sequencing and characterization of 21,243 full-length human cDNAs.</title>
        <authorList>
            <person name="Ota T."/>
            <person name="Suzuki Y."/>
            <person name="Nishikawa T."/>
            <person name="Otsuki T."/>
            <person name="Sugiyama T."/>
            <person name="Irie R."/>
            <person name="Wakamatsu A."/>
            <person name="Hayashi K."/>
            <person name="Sato H."/>
            <person name="Nagai K."/>
            <person name="Kimura K."/>
            <person name="Makita H."/>
            <person name="Sekine M."/>
            <person name="Obayashi M."/>
            <person name="Nishi T."/>
            <person name="Shibahara T."/>
            <person name="Tanaka T."/>
            <person name="Ishii S."/>
            <person name="Yamamoto J."/>
            <person name="Saito K."/>
            <person name="Kawai Y."/>
            <person name="Isono Y."/>
            <person name="Nakamura Y."/>
            <person name="Nagahari K."/>
            <person name="Murakami K."/>
            <person name="Yasuda T."/>
            <person name="Iwayanagi T."/>
            <person name="Wagatsuma M."/>
            <person name="Shiratori A."/>
            <person name="Sudo H."/>
            <person name="Hosoiri T."/>
            <person name="Kaku Y."/>
            <person name="Kodaira H."/>
            <person name="Kondo H."/>
            <person name="Sugawara M."/>
            <person name="Takahashi M."/>
            <person name="Kanda K."/>
            <person name="Yokoi T."/>
            <person name="Furuya T."/>
            <person name="Kikkawa E."/>
            <person name="Omura Y."/>
            <person name="Abe K."/>
            <person name="Kamihara K."/>
            <person name="Katsuta N."/>
            <person name="Sato K."/>
            <person name="Tanikawa M."/>
            <person name="Yamazaki M."/>
            <person name="Ninomiya K."/>
            <person name="Ishibashi T."/>
            <person name="Yamashita H."/>
            <person name="Murakawa K."/>
            <person name="Fujimori K."/>
            <person name="Tanai H."/>
            <person name="Kimata M."/>
            <person name="Watanabe M."/>
            <person name="Hiraoka S."/>
            <person name="Chiba Y."/>
            <person name="Ishida S."/>
            <person name="Ono Y."/>
            <person name="Takiguchi S."/>
            <person name="Watanabe S."/>
            <person name="Yosida M."/>
            <person name="Hotuta T."/>
            <person name="Kusano J."/>
            <person name="Kanehori K."/>
            <person name="Takahashi-Fujii A."/>
            <person name="Hara H."/>
            <person name="Tanase T.-O."/>
            <person name="Nomura Y."/>
            <person name="Togiya S."/>
            <person name="Komai F."/>
            <person name="Hara R."/>
            <person name="Takeuchi K."/>
            <person name="Arita M."/>
            <person name="Imose N."/>
            <person name="Musashino K."/>
            <person name="Yuuki H."/>
            <person name="Oshima A."/>
            <person name="Sasaki N."/>
            <person name="Aotsuka S."/>
            <person name="Yoshikawa Y."/>
            <person name="Matsunawa H."/>
            <person name="Ichihara T."/>
            <person name="Shiohata N."/>
            <person name="Sano S."/>
            <person name="Moriya S."/>
            <person name="Momiyama H."/>
            <person name="Satoh N."/>
            <person name="Takami S."/>
            <person name="Terashima Y."/>
            <person name="Suzuki O."/>
            <person name="Nakagawa S."/>
            <person name="Senoh A."/>
            <person name="Mizoguchi H."/>
            <person name="Goto Y."/>
            <person name="Shimizu F."/>
            <person name="Wakebe H."/>
            <person name="Hishigaki H."/>
            <person name="Watanabe T."/>
            <person name="Sugiyama A."/>
            <person name="Takemoto M."/>
            <person name="Kawakami B."/>
            <person name="Yamazaki M."/>
            <person name="Watanabe K."/>
            <person name="Kumagai A."/>
            <person name="Itakura S."/>
            <person name="Fukuzumi Y."/>
            <person name="Fujimori Y."/>
            <person name="Komiyama M."/>
            <person name="Tashiro H."/>
            <person name="Tanigami A."/>
            <person name="Fujiwara T."/>
            <person name="Ono T."/>
            <person name="Yamada K."/>
            <person name="Fujii Y."/>
            <person name="Ozaki K."/>
            <person name="Hirao M."/>
            <person name="Ohmori Y."/>
            <person name="Kawabata A."/>
            <person name="Hikiji T."/>
            <person name="Kobatake N."/>
            <person name="Inagaki H."/>
            <person name="Ikema Y."/>
            <person name="Okamoto S."/>
            <person name="Okitani R."/>
            <person name="Kawakami T."/>
            <person name="Noguchi S."/>
            <person name="Itoh T."/>
            <person name="Shigeta K."/>
            <person name="Senba T."/>
            <person name="Matsumura K."/>
            <person name="Nakajima Y."/>
            <person name="Mizuno T."/>
            <person name="Morinaga M."/>
            <person name="Sasaki M."/>
            <person name="Togashi T."/>
            <person name="Oyama M."/>
            <person name="Hata H."/>
            <person name="Watanabe M."/>
            <person name="Komatsu T."/>
            <person name="Mizushima-Sugano J."/>
            <person name="Satoh T."/>
            <person name="Shirai Y."/>
            <person name="Takahashi Y."/>
            <person name="Nakagawa K."/>
            <person name="Okumura K."/>
            <person name="Nagase T."/>
            <person name="Nomura N."/>
            <person name="Kikuchi H."/>
            <person name="Masuho Y."/>
            <person name="Yamashita R."/>
            <person name="Nakai K."/>
            <person name="Yada T."/>
            <person name="Nakamura Y."/>
            <person name="Ohara O."/>
            <person name="Isogai T."/>
            <person name="Sugano S."/>
        </authorList>
    </citation>
    <scope>NUCLEOTIDE SEQUENCE [LARGE SCALE MRNA]</scope>
    <source>
        <tissue>Testis</tissue>
    </source>
</reference>
<reference key="6">
    <citation type="journal article" date="1999" name="Nature">
        <title>The DNA sequence of human chromosome 22.</title>
        <authorList>
            <person name="Dunham I."/>
            <person name="Hunt A.R."/>
            <person name="Collins J.E."/>
            <person name="Bruskiewich R."/>
            <person name="Beare D.M."/>
            <person name="Clamp M."/>
            <person name="Smink L.J."/>
            <person name="Ainscough R."/>
            <person name="Almeida J.P."/>
            <person name="Babbage A.K."/>
            <person name="Bagguley C."/>
            <person name="Bailey J."/>
            <person name="Barlow K.F."/>
            <person name="Bates K.N."/>
            <person name="Beasley O.P."/>
            <person name="Bird C.P."/>
            <person name="Blakey S.E."/>
            <person name="Bridgeman A.M."/>
            <person name="Buck D."/>
            <person name="Burgess J."/>
            <person name="Burrill W.D."/>
            <person name="Burton J."/>
            <person name="Carder C."/>
            <person name="Carter N.P."/>
            <person name="Chen Y."/>
            <person name="Clark G."/>
            <person name="Clegg S.M."/>
            <person name="Cobley V.E."/>
            <person name="Cole C.G."/>
            <person name="Collier R.E."/>
            <person name="Connor R."/>
            <person name="Conroy D."/>
            <person name="Corby N.R."/>
            <person name="Coville G.J."/>
            <person name="Cox A.V."/>
            <person name="Davis J."/>
            <person name="Dawson E."/>
            <person name="Dhami P.D."/>
            <person name="Dockree C."/>
            <person name="Dodsworth S.J."/>
            <person name="Durbin R.M."/>
            <person name="Ellington A.G."/>
            <person name="Evans K.L."/>
            <person name="Fey J.M."/>
            <person name="Fleming K."/>
            <person name="French L."/>
            <person name="Garner A.A."/>
            <person name="Gilbert J.G.R."/>
            <person name="Goward M.E."/>
            <person name="Grafham D.V."/>
            <person name="Griffiths M.N.D."/>
            <person name="Hall C."/>
            <person name="Hall R.E."/>
            <person name="Hall-Tamlyn G."/>
            <person name="Heathcott R.W."/>
            <person name="Ho S."/>
            <person name="Holmes S."/>
            <person name="Hunt S.E."/>
            <person name="Jones M.C."/>
            <person name="Kershaw J."/>
            <person name="Kimberley A.M."/>
            <person name="King A."/>
            <person name="Laird G.K."/>
            <person name="Langford C.F."/>
            <person name="Leversha M.A."/>
            <person name="Lloyd C."/>
            <person name="Lloyd D.M."/>
            <person name="Martyn I.D."/>
            <person name="Mashreghi-Mohammadi M."/>
            <person name="Matthews L.H."/>
            <person name="Mccann O.T."/>
            <person name="Mcclay J."/>
            <person name="Mclaren S."/>
            <person name="McMurray A.A."/>
            <person name="Milne S.A."/>
            <person name="Mortimore B.J."/>
            <person name="Odell C.N."/>
            <person name="Pavitt R."/>
            <person name="Pearce A.V."/>
            <person name="Pearson D."/>
            <person name="Phillimore B.J.C.T."/>
            <person name="Phillips S.H."/>
            <person name="Plumb R.W."/>
            <person name="Ramsay H."/>
            <person name="Ramsey Y."/>
            <person name="Rogers L."/>
            <person name="Ross M.T."/>
            <person name="Scott C.E."/>
            <person name="Sehra H.K."/>
            <person name="Skuce C.D."/>
            <person name="Smalley S."/>
            <person name="Smith M.L."/>
            <person name="Soderlund C."/>
            <person name="Spragon L."/>
            <person name="Steward C.A."/>
            <person name="Sulston J.E."/>
            <person name="Swann R.M."/>
            <person name="Vaudin M."/>
            <person name="Wall M."/>
            <person name="Wallis J.M."/>
            <person name="Whiteley M.N."/>
            <person name="Willey D.L."/>
            <person name="Williams L."/>
            <person name="Williams S.A."/>
            <person name="Williamson H."/>
            <person name="Wilmer T.E."/>
            <person name="Wilming L."/>
            <person name="Wright C.L."/>
            <person name="Hubbard T."/>
            <person name="Bentley D.R."/>
            <person name="Beck S."/>
            <person name="Rogers J."/>
            <person name="Shimizu N."/>
            <person name="Minoshima S."/>
            <person name="Kawasaki K."/>
            <person name="Sasaki T."/>
            <person name="Asakawa S."/>
            <person name="Kudoh J."/>
            <person name="Shintani A."/>
            <person name="Shibuya K."/>
            <person name="Yoshizaki Y."/>
            <person name="Aoki N."/>
            <person name="Mitsuyama S."/>
            <person name="Roe B.A."/>
            <person name="Chen F."/>
            <person name="Chu L."/>
            <person name="Crabtree J."/>
            <person name="Deschamps S."/>
            <person name="Do A."/>
            <person name="Do T."/>
            <person name="Dorman A."/>
            <person name="Fang F."/>
            <person name="Fu Y."/>
            <person name="Hu P."/>
            <person name="Hua A."/>
            <person name="Kenton S."/>
            <person name="Lai H."/>
            <person name="Lao H.I."/>
            <person name="Lewis J."/>
            <person name="Lewis S."/>
            <person name="Lin S.-P."/>
            <person name="Loh P."/>
            <person name="Malaj E."/>
            <person name="Nguyen T."/>
            <person name="Pan H."/>
            <person name="Phan S."/>
            <person name="Qi S."/>
            <person name="Qian Y."/>
            <person name="Ray L."/>
            <person name="Ren Q."/>
            <person name="Shaull S."/>
            <person name="Sloan D."/>
            <person name="Song L."/>
            <person name="Wang Q."/>
            <person name="Wang Y."/>
            <person name="Wang Z."/>
            <person name="White J."/>
            <person name="Willingham D."/>
            <person name="Wu H."/>
            <person name="Yao Z."/>
            <person name="Zhan M."/>
            <person name="Zhang G."/>
            <person name="Chissoe S."/>
            <person name="Murray J."/>
            <person name="Miller N."/>
            <person name="Minx P."/>
            <person name="Fulton R."/>
            <person name="Johnson D."/>
            <person name="Bemis G."/>
            <person name="Bentley D."/>
            <person name="Bradshaw H."/>
            <person name="Bourne S."/>
            <person name="Cordes M."/>
            <person name="Du Z."/>
            <person name="Fulton L."/>
            <person name="Goela D."/>
            <person name="Graves T."/>
            <person name="Hawkins J."/>
            <person name="Hinds K."/>
            <person name="Kemp K."/>
            <person name="Latreille P."/>
            <person name="Layman D."/>
            <person name="Ozersky P."/>
            <person name="Rohlfing T."/>
            <person name="Scheet P."/>
            <person name="Walker C."/>
            <person name="Wamsley A."/>
            <person name="Wohldmann P."/>
            <person name="Pepin K."/>
            <person name="Nelson J."/>
            <person name="Korf I."/>
            <person name="Bedell J.A."/>
            <person name="Hillier L.W."/>
            <person name="Mardis E."/>
            <person name="Waterston R."/>
            <person name="Wilson R."/>
            <person name="Emanuel B.S."/>
            <person name="Shaikh T."/>
            <person name="Kurahashi H."/>
            <person name="Saitta S."/>
            <person name="Budarf M.L."/>
            <person name="McDermid H.E."/>
            <person name="Johnson A."/>
            <person name="Wong A.C.C."/>
            <person name="Morrow B.E."/>
            <person name="Edelmann L."/>
            <person name="Kim U.J."/>
            <person name="Shizuya H."/>
            <person name="Simon M.I."/>
            <person name="Dumanski J.P."/>
            <person name="Peyrard M."/>
            <person name="Kedra D."/>
            <person name="Seroussi E."/>
            <person name="Fransson I."/>
            <person name="Tapia I."/>
            <person name="Bruder C.E."/>
            <person name="O'Brien K.P."/>
            <person name="Wilkinson P."/>
            <person name="Bodenteich A."/>
            <person name="Hartman K."/>
            <person name="Hu X."/>
            <person name="Khan A.S."/>
            <person name="Lane L."/>
            <person name="Tilahun Y."/>
            <person name="Wright H."/>
        </authorList>
    </citation>
    <scope>NUCLEOTIDE SEQUENCE [LARGE SCALE GENOMIC DNA]</scope>
</reference>
<reference key="7">
    <citation type="submission" date="2005-07" db="EMBL/GenBank/DDBJ databases">
        <authorList>
            <person name="Mural R.J."/>
            <person name="Istrail S."/>
            <person name="Sutton G.G."/>
            <person name="Florea L."/>
            <person name="Halpern A.L."/>
            <person name="Mobarry C.M."/>
            <person name="Lippert R."/>
            <person name="Walenz B."/>
            <person name="Shatkay H."/>
            <person name="Dew I."/>
            <person name="Miller J.R."/>
            <person name="Flanigan M.J."/>
            <person name="Edwards N.J."/>
            <person name="Bolanos R."/>
            <person name="Fasulo D."/>
            <person name="Halldorsson B.V."/>
            <person name="Hannenhalli S."/>
            <person name="Turner R."/>
            <person name="Yooseph S."/>
            <person name="Lu F."/>
            <person name="Nusskern D.R."/>
            <person name="Shue B.C."/>
            <person name="Zheng X.H."/>
            <person name="Zhong F."/>
            <person name="Delcher A.L."/>
            <person name="Huson D.H."/>
            <person name="Kravitz S.A."/>
            <person name="Mouchard L."/>
            <person name="Reinert K."/>
            <person name="Remington K.A."/>
            <person name="Clark A.G."/>
            <person name="Waterman M.S."/>
            <person name="Eichler E.E."/>
            <person name="Adams M.D."/>
            <person name="Hunkapiller M.W."/>
            <person name="Myers E.W."/>
            <person name="Venter J.C."/>
        </authorList>
    </citation>
    <scope>NUCLEOTIDE SEQUENCE [LARGE SCALE GENOMIC DNA]</scope>
</reference>
<reference key="8">
    <citation type="journal article" date="2004" name="Genome Res.">
        <title>The status, quality, and expansion of the NIH full-length cDNA project: the Mammalian Gene Collection (MGC).</title>
        <authorList>
            <consortium name="The MGC Project Team"/>
        </authorList>
    </citation>
    <scope>NUCLEOTIDE SEQUENCE [LARGE SCALE MRNA]</scope>
    <source>
        <tissue>Lung</tissue>
        <tissue>Prostate</tissue>
    </source>
</reference>
<reference key="9">
    <citation type="journal article" date="2005" name="Genes Cells">
        <title>Identification of DRG family regulatory proteins (DFRPs): specific regulation of DRG1 and DRG2.</title>
        <authorList>
            <person name="Ishikawa K."/>
            <person name="Azuma S."/>
            <person name="Ikawa S."/>
            <person name="Semba K."/>
            <person name="Inoue J."/>
        </authorList>
    </citation>
    <scope>INTERACTION WITH ZC3H15</scope>
    <scope>SUBCELLULAR LOCATION</scope>
</reference>
<reference key="10">
    <citation type="journal article" date="2007" name="Nucleic Acids Res.">
        <title>Ubc9 fusion-directed SUMOylation identifies constitutive and inducible SUMOylation.</title>
        <authorList>
            <person name="Jakobs A."/>
            <person name="Himstedt F."/>
            <person name="Funk M."/>
            <person name="Korn B."/>
            <person name="Gaestel M."/>
            <person name="Niedenthal R."/>
        </authorList>
    </citation>
    <scope>SUMOYLATION</scope>
</reference>
<reference key="11">
    <citation type="journal article" date="2008" name="Structure">
        <title>Structure of the human protein kinase MPSK1 reveals an atypical activation loop architecture.</title>
        <authorList>
            <person name="Eswaran J."/>
            <person name="Bernad A."/>
            <person name="Ligos J.M."/>
            <person name="Guinea B."/>
            <person name="Debreczeni J.E."/>
            <person name="Sobott F."/>
            <person name="Parker S.A."/>
            <person name="Najmanovich R."/>
            <person name="Turk B.E."/>
            <person name="Knapp S."/>
        </authorList>
    </citation>
    <scope>PHOSPHORYLATION AT THR-100</scope>
    <scope>IDENTIFICATION BY MASS SPECTROMETRY</scope>
    <scope>INTERACTION WITH STK16</scope>
</reference>
<reference key="12">
    <citation type="journal article" date="2009" name="Biochem. Biophys. Res. Commun.">
        <title>Independent stabilizations of polysomal Drg1/Dfrp1 complex and non-polysomal Drg2/Dfrp2 complex in mammalian cells.</title>
        <authorList>
            <person name="Ishikawa K."/>
            <person name="Akiyama T."/>
            <person name="Ito K."/>
            <person name="Semba K."/>
            <person name="Inoue J."/>
        </authorList>
    </citation>
    <scope>INTERACTION WITH ZC3H15 IN THE DRG1-DFRP1/ZC3H15 COMPLEX</scope>
    <scope>SUBCELLULAR LOCATION</scope>
</reference>
<reference key="13">
    <citation type="journal article" date="2011" name="BMC Syst. Biol.">
        <title>Initial characterization of the human central proteome.</title>
        <authorList>
            <person name="Burkard T.R."/>
            <person name="Planyavsky M."/>
            <person name="Kaupe I."/>
            <person name="Breitwieser F.P."/>
            <person name="Buerckstuemmer T."/>
            <person name="Bennett K.L."/>
            <person name="Superti-Furga G."/>
            <person name="Colinge J."/>
        </authorList>
    </citation>
    <scope>IDENTIFICATION BY MASS SPECTROMETRY [LARGE SCALE ANALYSIS]</scope>
</reference>
<reference key="14">
    <citation type="journal article" date="2012" name="Proc. Natl. Acad. Sci. U.S.A.">
        <title>N-terminal acetylome analyses and functional insights of the N-terminal acetyltransferase NatB.</title>
        <authorList>
            <person name="Van Damme P."/>
            <person name="Lasa M."/>
            <person name="Polevoda B."/>
            <person name="Gazquez C."/>
            <person name="Elosegui-Artola A."/>
            <person name="Kim D.S."/>
            <person name="De Juan-Pardo E."/>
            <person name="Demeyer K."/>
            <person name="Hole K."/>
            <person name="Larrea E."/>
            <person name="Timmerman E."/>
            <person name="Prieto J."/>
            <person name="Arnesen T."/>
            <person name="Sherman F."/>
            <person name="Gevaert K."/>
            <person name="Aldabe R."/>
        </authorList>
    </citation>
    <scope>ACETYLATION [LARGE SCALE ANALYSIS] AT SER-2</scope>
    <scope>CLEAVAGE OF INITIATOR METHIONINE [LARGE SCALE ANALYSIS]</scope>
    <scope>IDENTIFICATION BY MASS SPECTROMETRY [LARGE SCALE ANALYSIS]</scope>
</reference>
<reference key="15">
    <citation type="journal article" date="2013" name="FEBS J.">
        <title>Human Drg1 is a potassium-dependent GTPase enhanced by Lerepo4.</title>
        <authorList>
            <person name="Perez-Arellano I."/>
            <person name="Spinola-Amilibia M."/>
            <person name="Bravo J."/>
        </authorList>
    </citation>
    <scope>FUNCTION</scope>
    <scope>CATALYTIC ACTIVITY</scope>
    <scope>BIOPHYSICOCHEMICAL PROPERTIES</scope>
    <scope>ACTIVITY REGULATION</scope>
    <scope>MUTAGENESIS OF THR-100</scope>
    <scope>DOMAIN</scope>
</reference>
<reference key="16">
    <citation type="journal article" date="2015" name="Proteomics">
        <title>N-terminome analysis of the human mitochondrial proteome.</title>
        <authorList>
            <person name="Vaca Jacome A.S."/>
            <person name="Rabilloud T."/>
            <person name="Schaeffer-Reiss C."/>
            <person name="Rompais M."/>
            <person name="Ayoub D."/>
            <person name="Lane L."/>
            <person name="Bairoch A."/>
            <person name="Van Dorsselaer A."/>
            <person name="Carapito C."/>
        </authorList>
    </citation>
    <scope>IDENTIFICATION BY MASS SPECTROMETRY [LARGE SCALE ANALYSIS]</scope>
</reference>
<reference key="17">
    <citation type="journal article" date="2015" name="Acta Trop.">
        <title>Host interactions of Chandipura virus matrix protein.</title>
        <authorList>
            <person name="Rajasekharan S."/>
            <person name="Kumar K."/>
            <person name="Rana J."/>
            <person name="Gupta A."/>
            <person name="Chaudhary V.K."/>
            <person name="Gupta S."/>
        </authorList>
    </citation>
    <scope>INTERACTION WITH CHANDIPURA VIRUS MATRIX PROTEIN (MICROBIAL INFECTION)</scope>
</reference>
<reference key="18">
    <citation type="journal article" date="2017" name="Sci. Rep.">
        <title>Developmentally Regulated GTP binding protein 1 (DRG1) controls microtubule dynamics.</title>
        <authorList>
            <person name="Schellhaus A.K."/>
            <person name="Moreno-Andres D."/>
            <person name="Chugh M."/>
            <person name="Yokoyama H."/>
            <person name="Moschopoulou A."/>
            <person name="De S."/>
            <person name="Bono F."/>
            <person name="Hipp K."/>
            <person name="Schaeffer E."/>
            <person name="Antonin W."/>
        </authorList>
    </citation>
    <scope>FUNCTION</scope>
    <scope>INTERACTION WITH MICROTUBULES</scope>
    <scope>DOMAIN</scope>
</reference>
<reference key="19">
    <citation type="journal article" date="2018" name="Nat. Chem. Biol.">
        <title>The Jumonji-C oxygenase JMJD7 catalyzes (3S)-lysyl hydroxylation of TRAFAC GTPases.</title>
        <authorList>
            <person name="Markolovic S."/>
            <person name="Zhuang Q."/>
            <person name="Wilkins S.E."/>
            <person name="Eaton C.D."/>
            <person name="Abboud M.I."/>
            <person name="Katz M.J."/>
            <person name="McNeil H.E."/>
            <person name="Lesniak R.K."/>
            <person name="Hall C."/>
            <person name="Struwe W.B."/>
            <person name="Konietzny R."/>
            <person name="Davis S."/>
            <person name="Yang M."/>
            <person name="Ge W."/>
            <person name="Benesch J.L.P."/>
            <person name="Kessler B.M."/>
            <person name="Ratcliffe P.J."/>
            <person name="Cockman M.E."/>
            <person name="Fischer R."/>
            <person name="Wappner P."/>
            <person name="Chowdhury R."/>
            <person name="Coleman M.L."/>
            <person name="Schofield C.J."/>
        </authorList>
    </citation>
    <scope>FUNCTION</scope>
    <scope>SUBCELLULAR LOCATION</scope>
    <scope>MUTAGENESIS OF LYS-22</scope>
    <scope>INTERACTION WITH JMJD7</scope>
    <scope>CATALYTIC ACTIVITY</scope>
    <scope>HYDROXYLATION AT LYS-22</scope>
</reference>
<reference key="20">
    <citation type="journal article" date="2022" name="Sci. Rep.">
        <title>Conservation of the unusual dimeric JmjC fold of JMJD7 from Drosophila melanogaster to humans.</title>
        <authorList>
            <person name="Chowdhury R."/>
            <person name="Abboud M.I."/>
            <person name="Wiley J."/>
            <person name="Tumber A."/>
            <person name="Markolovic S."/>
            <person name="Schofield C.J."/>
        </authorList>
    </citation>
    <scope>HYDROXYLATION AT LYS-22</scope>
</reference>
<reference key="21">
    <citation type="submission" date="2007-09" db="PDB data bank">
        <title>Solution structures of the TGS domain of human developmentally-regulated GTP-binding protein 1.</title>
        <authorList>
            <consortium name="RIKEN structural genomics initiative (RSGI)"/>
        </authorList>
    </citation>
    <scope>STRUCTURE BY NMR OF 288-367</scope>
</reference>
<reference key="22">
    <citation type="journal article" date="2023" name="Genet. Med.">
        <title>Inactivation of DRG1, encoding a translation factor GTPase, causes a recessive neurodevelopmental disorder.</title>
        <authorList>
            <person name="Westrip C.A.E."/>
            <person name="Paul F."/>
            <person name="Al-Murshedi F."/>
            <person name="Qaitoon H."/>
            <person name="Cham B."/>
            <person name="Fletcher S.C."/>
            <person name="Hendrix E."/>
            <person name="Boora U."/>
            <person name="Ng A.Y.J."/>
            <person name="Bonnard C."/>
            <person name="Najafi M."/>
            <person name="Alawbathani S."/>
            <person name="Lambert I."/>
            <person name="Fox G."/>
            <person name="Venkatesh B."/>
            <person name="Bertoli-Avella A."/>
            <person name="Tan E.S."/>
            <person name="Al-Maawali A."/>
            <person name="Reversade B."/>
            <person name="Coleman M.L."/>
        </authorList>
    </citation>
    <scope>VARIANTS TANALS 54-GLY--LYS-367 DEL; 140-ARG--LYS-367 DEL; PHE-248 AND 263-LYS--LYS-367 DEL</scope>
    <scope>CHARACTERIZATION OF VARIANTS TANALS PHE-248 AND 263-LYS--LYS-367 DEL</scope>
    <scope>INVOLVEMENT IN TANALS</scope>
    <scope>INTERACTION WITH DFRP1/ZC3H15</scope>
    <scope>FUNCTION</scope>
    <scope>MUTAGENESIS OF ASP-117</scope>
</reference>
<keyword id="KW-0002">3D-structure</keyword>
<keyword id="KW-0007">Acetylation</keyword>
<keyword id="KW-0963">Cytoplasm</keyword>
<keyword id="KW-0225">Disease variant</keyword>
<keyword id="KW-0242">Dwarfism</keyword>
<keyword id="KW-0342">GTP-binding</keyword>
<keyword id="KW-0945">Host-virus interaction</keyword>
<keyword id="KW-0378">Hydrolase</keyword>
<keyword id="KW-0379">Hydroxylation</keyword>
<keyword id="KW-0991">Intellectual disability</keyword>
<keyword id="KW-0460">Magnesium</keyword>
<keyword id="KW-0479">Metal-binding</keyword>
<keyword id="KW-0547">Nucleotide-binding</keyword>
<keyword id="KW-0539">Nucleus</keyword>
<keyword id="KW-0597">Phosphoprotein</keyword>
<keyword id="KW-1267">Proteomics identification</keyword>
<keyword id="KW-1185">Reference proteome</keyword>
<keyword id="KW-0832">Ubl conjugation</keyword>